<feature type="chain" id="PRO_0000147555" description="Tetrahydromethanopterin S-methyltransferase subunit G">
    <location>
        <begin position="1"/>
        <end position="84"/>
    </location>
</feature>
<feature type="transmembrane region" description="Helical" evidence="1">
    <location>
        <begin position="50"/>
        <end position="70"/>
    </location>
</feature>
<dbReference type="EC" id="7.2.1.4" evidence="1"/>
<dbReference type="EMBL" id="L77117">
    <property type="protein sequence ID" value="AAB98858.1"/>
    <property type="molecule type" value="Genomic_DNA"/>
</dbReference>
<dbReference type="PIR" id="E64406">
    <property type="entry name" value="E64406"/>
</dbReference>
<dbReference type="RefSeq" id="WP_010870367.1">
    <property type="nucleotide sequence ID" value="NC_000909.1"/>
</dbReference>
<dbReference type="SMR" id="Q58263"/>
<dbReference type="FunCoup" id="Q58263">
    <property type="interactions" value="90"/>
</dbReference>
<dbReference type="STRING" id="243232.MJ_0853"/>
<dbReference type="PaxDb" id="243232-MJ_0853"/>
<dbReference type="EnsemblBacteria" id="AAB98858">
    <property type="protein sequence ID" value="AAB98858"/>
    <property type="gene ID" value="MJ_0853"/>
</dbReference>
<dbReference type="GeneID" id="1451741"/>
<dbReference type="KEGG" id="mja:MJ_0853"/>
<dbReference type="eggNOG" id="arCOG03380">
    <property type="taxonomic scope" value="Archaea"/>
</dbReference>
<dbReference type="HOGENOM" id="CLU_191926_0_0_2"/>
<dbReference type="InParanoid" id="Q58263"/>
<dbReference type="OrthoDB" id="147532at2157"/>
<dbReference type="PhylomeDB" id="Q58263"/>
<dbReference type="UniPathway" id="UPA00640">
    <property type="reaction ID" value="UER00698"/>
</dbReference>
<dbReference type="Proteomes" id="UP000000805">
    <property type="component" value="Chromosome"/>
</dbReference>
<dbReference type="GO" id="GO:0005886">
    <property type="term" value="C:plasma membrane"/>
    <property type="evidence" value="ECO:0007669"/>
    <property type="project" value="UniProtKB-SubCell"/>
</dbReference>
<dbReference type="GO" id="GO:0030269">
    <property type="term" value="F:tetrahydromethanopterin S-methyltransferase activity"/>
    <property type="evidence" value="ECO:0007669"/>
    <property type="project" value="UniProtKB-UniRule"/>
</dbReference>
<dbReference type="GO" id="GO:0019386">
    <property type="term" value="P:methanogenesis, from carbon dioxide"/>
    <property type="evidence" value="ECO:0007669"/>
    <property type="project" value="UniProtKB-UniRule"/>
</dbReference>
<dbReference type="GO" id="GO:0032259">
    <property type="term" value="P:methylation"/>
    <property type="evidence" value="ECO:0007669"/>
    <property type="project" value="UniProtKB-KW"/>
</dbReference>
<dbReference type="GO" id="GO:0006730">
    <property type="term" value="P:one-carbon metabolic process"/>
    <property type="evidence" value="ECO:0007669"/>
    <property type="project" value="UniProtKB-UniRule"/>
</dbReference>
<dbReference type="HAMAP" id="MF_01500">
    <property type="entry name" value="MtrG"/>
    <property type="match status" value="1"/>
</dbReference>
<dbReference type="InterPro" id="IPR005866">
    <property type="entry name" value="THM_MeTrfase_su_G"/>
</dbReference>
<dbReference type="NCBIfam" id="TIGR01149">
    <property type="entry name" value="mtrG"/>
    <property type="match status" value="1"/>
</dbReference>
<dbReference type="Pfam" id="PF04210">
    <property type="entry name" value="MtrG"/>
    <property type="match status" value="1"/>
</dbReference>
<dbReference type="PIRSF" id="PIRSF006500">
    <property type="entry name" value="MtrG"/>
    <property type="match status" value="1"/>
</dbReference>
<reference key="1">
    <citation type="journal article" date="1996" name="Science">
        <title>Complete genome sequence of the methanogenic archaeon, Methanococcus jannaschii.</title>
        <authorList>
            <person name="Bult C.J."/>
            <person name="White O."/>
            <person name="Olsen G.J."/>
            <person name="Zhou L."/>
            <person name="Fleischmann R.D."/>
            <person name="Sutton G.G."/>
            <person name="Blake J.A."/>
            <person name="FitzGerald L.M."/>
            <person name="Clayton R.A."/>
            <person name="Gocayne J.D."/>
            <person name="Kerlavage A.R."/>
            <person name="Dougherty B.A."/>
            <person name="Tomb J.-F."/>
            <person name="Adams M.D."/>
            <person name="Reich C.I."/>
            <person name="Overbeek R."/>
            <person name="Kirkness E.F."/>
            <person name="Weinstock K.G."/>
            <person name="Merrick J.M."/>
            <person name="Glodek A."/>
            <person name="Scott J.L."/>
            <person name="Geoghagen N.S.M."/>
            <person name="Weidman J.F."/>
            <person name="Fuhrmann J.L."/>
            <person name="Nguyen D."/>
            <person name="Utterback T.R."/>
            <person name="Kelley J.M."/>
            <person name="Peterson J.D."/>
            <person name="Sadow P.W."/>
            <person name="Hanna M.C."/>
            <person name="Cotton M.D."/>
            <person name="Roberts K.M."/>
            <person name="Hurst M.A."/>
            <person name="Kaine B.P."/>
            <person name="Borodovsky M."/>
            <person name="Klenk H.-P."/>
            <person name="Fraser C.M."/>
            <person name="Smith H.O."/>
            <person name="Woese C.R."/>
            <person name="Venter J.C."/>
        </authorList>
    </citation>
    <scope>NUCLEOTIDE SEQUENCE [LARGE SCALE GENOMIC DNA]</scope>
    <source>
        <strain>ATCC 43067 / DSM 2661 / JAL-1 / JCM 10045 / NBRC 100440</strain>
    </source>
</reference>
<gene>
    <name evidence="1" type="primary">mtrG</name>
    <name type="ordered locus">MJ0853</name>
</gene>
<sequence length="84" mass="9449">MSEDEKLPQVIMDPADYEALKKRLDELEKKVENTNAELFQLAGKKVGRDIGILYGLVIGIILSYILPALIKIIQILSLKVLVQQ</sequence>
<keyword id="KW-1003">Cell membrane</keyword>
<keyword id="KW-0472">Membrane</keyword>
<keyword id="KW-0484">Methanogenesis</keyword>
<keyword id="KW-0489">Methyltransferase</keyword>
<keyword id="KW-0554">One-carbon metabolism</keyword>
<keyword id="KW-1185">Reference proteome</keyword>
<keyword id="KW-0808">Transferase</keyword>
<keyword id="KW-1278">Translocase</keyword>
<keyword id="KW-0812">Transmembrane</keyword>
<keyword id="KW-1133">Transmembrane helix</keyword>
<name>MTRG_METJA</name>
<organism>
    <name type="scientific">Methanocaldococcus jannaschii (strain ATCC 43067 / DSM 2661 / JAL-1 / JCM 10045 / NBRC 100440)</name>
    <name type="common">Methanococcus jannaschii</name>
    <dbReference type="NCBI Taxonomy" id="243232"/>
    <lineage>
        <taxon>Archaea</taxon>
        <taxon>Methanobacteriati</taxon>
        <taxon>Methanobacteriota</taxon>
        <taxon>Methanomada group</taxon>
        <taxon>Methanococci</taxon>
        <taxon>Methanococcales</taxon>
        <taxon>Methanocaldococcaceae</taxon>
        <taxon>Methanocaldococcus</taxon>
    </lineage>
</organism>
<accession>Q58263</accession>
<comment type="function">
    <text evidence="1">Part of a complex that catalyzes the formation of methyl-coenzyme M and tetrahydromethanopterin from coenzyme M and methyl-tetrahydromethanopterin. This is an energy-conserving, sodium-ion translocating step.</text>
</comment>
<comment type="catalytic activity">
    <reaction evidence="1">
        <text>5-methyl-5,6,7,8-tetrahydromethanopterin + coenzyme M + 2 Na(+)(in) = 5,6,7,8-tetrahydromethanopterin + methyl-coenzyme M + 2 Na(+)(out)</text>
        <dbReference type="Rhea" id="RHEA:53492"/>
        <dbReference type="ChEBI" id="CHEBI:29101"/>
        <dbReference type="ChEBI" id="CHEBI:58103"/>
        <dbReference type="ChEBI" id="CHEBI:58116"/>
        <dbReference type="ChEBI" id="CHEBI:58286"/>
        <dbReference type="ChEBI" id="CHEBI:58319"/>
        <dbReference type="EC" id="7.2.1.4"/>
    </reaction>
</comment>
<comment type="pathway">
    <text evidence="1">One-carbon metabolism; methanogenesis from CO(2); methyl-coenzyme M from 5,10-methylene-5,6,7,8-tetrahydromethanopterin: step 2/2.</text>
</comment>
<comment type="subunit">
    <text evidence="1">The complex is composed of 8 subunits; MtrA, MtrB, MtrC, MtrD, MtrE, MtrF, MtrG and MtrH.</text>
</comment>
<comment type="subcellular location">
    <subcellularLocation>
        <location evidence="1">Cell membrane</location>
        <topology evidence="1">Single-pass membrane protein</topology>
    </subcellularLocation>
</comment>
<comment type="similarity">
    <text evidence="1">Belongs to the MtrG family.</text>
</comment>
<evidence type="ECO:0000255" key="1">
    <source>
        <dbReference type="HAMAP-Rule" id="MF_01500"/>
    </source>
</evidence>
<protein>
    <recommendedName>
        <fullName evidence="1">Tetrahydromethanopterin S-methyltransferase subunit G</fullName>
        <ecNumber evidence="1">7.2.1.4</ecNumber>
    </recommendedName>
    <alternativeName>
        <fullName evidence="1">N5-methyltetrahydromethanopterin--coenzyme M methyltransferase subunit G</fullName>
    </alternativeName>
</protein>
<proteinExistence type="inferred from homology"/>